<keyword id="KW-0025">Alternative splicing</keyword>
<keyword id="KW-1015">Disulfide bond</keyword>
<keyword id="KW-1032">Host cell membrane</keyword>
<keyword id="KW-1043">Host membrane</keyword>
<keyword id="KW-0945">Host-virus interaction</keyword>
<keyword id="KW-0375">Hydrogen ion transport</keyword>
<keyword id="KW-1083">Inhibition of host autophagy by virus</keyword>
<keyword id="KW-0407">Ion channel</keyword>
<keyword id="KW-0406">Ion transport</keyword>
<keyword id="KW-0449">Lipoprotein</keyword>
<keyword id="KW-0472">Membrane</keyword>
<keyword id="KW-0564">Palmitate</keyword>
<keyword id="KW-0597">Phosphoprotein</keyword>
<keyword id="KW-0735">Signal-anchor</keyword>
<keyword id="KW-0812">Transmembrane</keyword>
<keyword id="KW-1133">Transmembrane helix</keyword>
<keyword id="KW-0813">Transport</keyword>
<keyword id="KW-1182">Viral ion channel</keyword>
<keyword id="KW-0946">Virion</keyword>
<reference key="1">
    <citation type="journal article" date="1998" name="Arch. Virol.">
        <title>Phylogenetic analyses of the matrix and non-structural genes of equine influenza viruses.</title>
        <authorList>
            <person name="Lindstrom S."/>
            <person name="Endo A."/>
            <person name="Sugita S."/>
            <person name="Pecoraro M."/>
            <person name="Hiromoto Y."/>
            <person name="Kamada M."/>
            <person name="Takahashi T."/>
            <person name="Nerome K."/>
        </authorList>
    </citation>
    <scope>NUCLEOTIDE SEQUENCE [GENOMIC RNA]</scope>
</reference>
<protein>
    <recommendedName>
        <fullName evidence="1">Matrix protein 2</fullName>
    </recommendedName>
    <alternativeName>
        <fullName evidence="1">Proton channel protein M2</fullName>
    </alternativeName>
</protein>
<evidence type="ECO:0000255" key="1">
    <source>
        <dbReference type="HAMAP-Rule" id="MF_04069"/>
    </source>
</evidence>
<evidence type="ECO:0000256" key="2">
    <source>
        <dbReference type="SAM" id="MobiDB-lite"/>
    </source>
</evidence>
<sequence>MSLLTEVETPTRNGWECKCSDSSDPLVIAASIIGILHLILWILDRLFFKFIYRRLKYGLKRGPSTEGVPESMREEYRQEQQNAVDVDDGHFVNIELE</sequence>
<name>M2_I81A2</name>
<gene>
    <name evidence="1" type="primary">M</name>
</gene>
<organism>
    <name type="scientific">Influenza A virus (strain A/Equine/Kentucky/1/1981)</name>
    <dbReference type="NCBI Taxonomy" id="475467"/>
    <lineage>
        <taxon>Viruses</taxon>
        <taxon>Riboviria</taxon>
        <taxon>Orthornavirae</taxon>
        <taxon>Negarnaviricota</taxon>
        <taxon>Polyploviricotina</taxon>
        <taxon>Insthoviricetes</taxon>
        <taxon>Articulavirales</taxon>
        <taxon>Orthomyxoviridae</taxon>
        <taxon>Alphainfluenzavirus</taxon>
        <taxon>Alphainfluenzavirus influenzae</taxon>
        <taxon>Influenza A virus</taxon>
    </lineage>
</organism>
<proteinExistence type="inferred from homology"/>
<accession>Q77ZL3</accession>
<comment type="function">
    <text evidence="1">Forms a proton-selective ion channel that is necessary for the efficient release of the viral genome during virus entry. After attaching to the cell surface, the virion enters the cell by endocytosis. Acidification of the endosome triggers M2 ion channel activity. The influx of protons into virion interior is believed to disrupt interactions between the viral ribonucleoprotein (RNP), matrix protein 1 (M1), and lipid bilayers, thereby freeing the viral genome from interaction with viral proteins and enabling RNA segments to migrate to the host cell nucleus, where influenza virus RNA transcription and replication occur. Also plays a role in viral proteins secretory pathway. Elevates the intravesicular pH of normally acidic compartments, such as trans-Golgi network, preventing newly formed hemagglutinin from premature switching to the fusion-active conformation.</text>
</comment>
<comment type="activity regulation">
    <text>The M2 protein from most influenza A strains is inhibited by amantadine and rimantadine, resulting in viral uncoating incapacity. Emergence of amantadine-resistant variants is usually rapid.</text>
</comment>
<comment type="subunit">
    <text evidence="1">Homotetramer; composed of two disulfide-linked dimers held together by non-covalent interactions. May interact with matrix protein 1.</text>
</comment>
<comment type="subcellular location">
    <subcellularLocation>
        <location evidence="1">Virion membrane</location>
    </subcellularLocation>
    <subcellularLocation>
        <location evidence="1">Host apical cell membrane</location>
        <topology evidence="1">Single-pass type III membrane protein</topology>
    </subcellularLocation>
    <text evidence="1">Abundantly expressed at the apical plasma membrane in infected polarized epithelial cells, in close proximity to budding and assembled virions. Minor component of virions (only 16-20 molecules/virion).</text>
</comment>
<comment type="alternative products">
    <event type="alternative splicing"/>
    <isoform>
        <id>Q77ZL3-1</id>
        <name>M2</name>
        <sequence type="displayed"/>
    </isoform>
    <isoform>
        <id>Q77ZL2-1</id>
        <name>M1</name>
        <sequence type="external"/>
    </isoform>
    <text>Only the first 9 residues are shared by the 2 isoforms.</text>
</comment>
<comment type="domain">
    <text evidence="1">Cytoplasmic tail plays an important role in virion assembly and morphogenesis.</text>
</comment>
<comment type="miscellaneous">
    <text evidence="1">When the channel is activated, one or more imidazole moieties of His-37 probably become bi-protonated.</text>
</comment>
<comment type="similarity">
    <text evidence="1">Belongs to the influenza viruses matrix protein M2 family.</text>
</comment>
<feature type="chain" id="PRO_0000326375" description="Matrix protein 2">
    <location>
        <begin position="1"/>
        <end position="97"/>
    </location>
</feature>
<feature type="topological domain" description="Virion surface" evidence="1">
    <location>
        <begin position="1"/>
        <end position="22"/>
    </location>
</feature>
<feature type="transmembrane region" description="Helical; Signal-anchor for type III membrane protein" evidence="1">
    <location>
        <begin position="23"/>
        <end position="43"/>
    </location>
</feature>
<feature type="topological domain" description="Intravirion" evidence="1">
    <location>
        <begin position="44"/>
        <end position="97"/>
    </location>
</feature>
<feature type="region of interest" description="Disordered" evidence="2">
    <location>
        <begin position="61"/>
        <end position="80"/>
    </location>
</feature>
<feature type="site" description="Essential for channel activity, possibly by being protonated during channel activation, and by forming the channel gate and the selective filter" evidence="1">
    <location>
        <position position="37"/>
    </location>
</feature>
<feature type="site" description="Seems to be involved in pH gating" evidence="1">
    <location>
        <position position="41"/>
    </location>
</feature>
<feature type="modified residue" description="Phosphoserine; by host" evidence="1">
    <location>
        <position position="64"/>
    </location>
</feature>
<feature type="disulfide bond" description="Interchain (with C-17)" evidence="1">
    <location>
        <position position="17"/>
    </location>
</feature>
<feature type="disulfide bond" description="Interchain (with C-19)" evidence="1">
    <location>
        <position position="19"/>
    </location>
</feature>
<dbReference type="EMBL" id="AF001676">
    <property type="protein sequence ID" value="AAC31277.1"/>
    <property type="molecule type" value="Genomic_RNA"/>
</dbReference>
<dbReference type="SMR" id="Q77ZL3"/>
<dbReference type="GO" id="GO:0020002">
    <property type="term" value="C:host cell plasma membrane"/>
    <property type="evidence" value="ECO:0007669"/>
    <property type="project" value="UniProtKB-SubCell"/>
</dbReference>
<dbReference type="GO" id="GO:0016020">
    <property type="term" value="C:membrane"/>
    <property type="evidence" value="ECO:0007669"/>
    <property type="project" value="UniProtKB-UniRule"/>
</dbReference>
<dbReference type="GO" id="GO:0055036">
    <property type="term" value="C:virion membrane"/>
    <property type="evidence" value="ECO:0007669"/>
    <property type="project" value="UniProtKB-SubCell"/>
</dbReference>
<dbReference type="GO" id="GO:0005216">
    <property type="term" value="F:monoatomic ion channel activity"/>
    <property type="evidence" value="ECO:0007669"/>
    <property type="project" value="UniProtKB-UniRule"/>
</dbReference>
<dbReference type="GO" id="GO:0015078">
    <property type="term" value="F:proton transmembrane transporter activity"/>
    <property type="evidence" value="ECO:0007669"/>
    <property type="project" value="UniProtKB-UniRule"/>
</dbReference>
<dbReference type="GO" id="GO:0051259">
    <property type="term" value="P:protein complex oligomerization"/>
    <property type="evidence" value="ECO:0007669"/>
    <property type="project" value="UniProtKB-UniRule"/>
</dbReference>
<dbReference type="GO" id="GO:0044694">
    <property type="term" value="P:symbiont genome entry into host cell via pore formation in plasma membrane"/>
    <property type="evidence" value="ECO:0007669"/>
    <property type="project" value="UniProtKB-UniRule"/>
</dbReference>
<dbReference type="GO" id="GO:0140321">
    <property type="term" value="P:symbiont-mediated suppression of host autophagy"/>
    <property type="evidence" value="ECO:0007669"/>
    <property type="project" value="UniProtKB-KW"/>
</dbReference>
<dbReference type="Gene3D" id="6.10.250.1640">
    <property type="match status" value="1"/>
</dbReference>
<dbReference type="HAMAP" id="MF_04069">
    <property type="entry name" value="INFV_M2"/>
    <property type="match status" value="1"/>
</dbReference>
<dbReference type="InterPro" id="IPR002089">
    <property type="entry name" value="Flu_M2"/>
</dbReference>
<dbReference type="Pfam" id="PF00599">
    <property type="entry name" value="Flu_M2"/>
    <property type="match status" value="1"/>
</dbReference>
<organismHost>
    <name type="scientific">Aves</name>
    <dbReference type="NCBI Taxonomy" id="8782"/>
</organismHost>
<organismHost>
    <name type="scientific">Equus caballus</name>
    <name type="common">Horse</name>
    <dbReference type="NCBI Taxonomy" id="9796"/>
</organismHost>